<comment type="similarity">
    <text evidence="1">Belongs to the UPF0145 family.</text>
</comment>
<protein>
    <recommendedName>
        <fullName evidence="1">UPF0145 protein alr2488</fullName>
    </recommendedName>
</protein>
<reference key="1">
    <citation type="journal article" date="2001" name="DNA Res.">
        <title>Complete genomic sequence of the filamentous nitrogen-fixing cyanobacterium Anabaena sp. strain PCC 7120.</title>
        <authorList>
            <person name="Kaneko T."/>
            <person name="Nakamura Y."/>
            <person name="Wolk C.P."/>
            <person name="Kuritz T."/>
            <person name="Sasamoto S."/>
            <person name="Watanabe A."/>
            <person name="Iriguchi M."/>
            <person name="Ishikawa A."/>
            <person name="Kawashima K."/>
            <person name="Kimura T."/>
            <person name="Kishida Y."/>
            <person name="Kohara M."/>
            <person name="Matsumoto M."/>
            <person name="Matsuno A."/>
            <person name="Muraki A."/>
            <person name="Nakazaki N."/>
            <person name="Shimpo S."/>
            <person name="Sugimoto M."/>
            <person name="Takazawa M."/>
            <person name="Yamada M."/>
            <person name="Yasuda M."/>
            <person name="Tabata S."/>
        </authorList>
    </citation>
    <scope>NUCLEOTIDE SEQUENCE [LARGE SCALE GENOMIC DNA]</scope>
    <source>
        <strain>PCC 7120 / SAG 25.82 / UTEX 2576</strain>
    </source>
</reference>
<name>Y2488_NOSS1</name>
<accession>Q8YU66</accession>
<organism>
    <name type="scientific">Nostoc sp. (strain PCC 7120 / SAG 25.82 / UTEX 2576)</name>
    <dbReference type="NCBI Taxonomy" id="103690"/>
    <lineage>
        <taxon>Bacteria</taxon>
        <taxon>Bacillati</taxon>
        <taxon>Cyanobacteriota</taxon>
        <taxon>Cyanophyceae</taxon>
        <taxon>Nostocales</taxon>
        <taxon>Nostocaceae</taxon>
        <taxon>Nostoc</taxon>
    </lineage>
</organism>
<evidence type="ECO:0000255" key="1">
    <source>
        <dbReference type="HAMAP-Rule" id="MF_00338"/>
    </source>
</evidence>
<dbReference type="EMBL" id="BA000019">
    <property type="protein sequence ID" value="BAB74187.1"/>
    <property type="molecule type" value="Genomic_DNA"/>
</dbReference>
<dbReference type="PIR" id="AI2116">
    <property type="entry name" value="AI2116"/>
</dbReference>
<dbReference type="RefSeq" id="WP_010996644.1">
    <property type="nucleotide sequence ID" value="NZ_RSCN01000002.1"/>
</dbReference>
<dbReference type="SMR" id="Q8YU66"/>
<dbReference type="KEGG" id="ana:alr2488"/>
<dbReference type="eggNOG" id="COG0393">
    <property type="taxonomic scope" value="Bacteria"/>
</dbReference>
<dbReference type="OrthoDB" id="9796448at2"/>
<dbReference type="Proteomes" id="UP000002483">
    <property type="component" value="Chromosome"/>
</dbReference>
<dbReference type="Gene3D" id="3.30.110.70">
    <property type="entry name" value="Hypothetical protein apc22750. Chain B"/>
    <property type="match status" value="1"/>
</dbReference>
<dbReference type="HAMAP" id="MF_00338">
    <property type="entry name" value="UPF0145"/>
    <property type="match status" value="1"/>
</dbReference>
<dbReference type="InterPro" id="IPR035439">
    <property type="entry name" value="UPF0145_dom_sf"/>
</dbReference>
<dbReference type="InterPro" id="IPR002765">
    <property type="entry name" value="UPF0145_YbjQ-like"/>
</dbReference>
<dbReference type="PANTHER" id="PTHR34068">
    <property type="entry name" value="UPF0145 PROTEIN YBJQ"/>
    <property type="match status" value="1"/>
</dbReference>
<dbReference type="PANTHER" id="PTHR34068:SF1">
    <property type="entry name" value="UPF0145 PROTEIN YBJQ"/>
    <property type="match status" value="1"/>
</dbReference>
<dbReference type="Pfam" id="PF01906">
    <property type="entry name" value="YbjQ_1"/>
    <property type="match status" value="1"/>
</dbReference>
<dbReference type="SUPFAM" id="SSF117782">
    <property type="entry name" value="YbjQ-like"/>
    <property type="match status" value="1"/>
</dbReference>
<proteinExistence type="inferred from homology"/>
<keyword id="KW-1185">Reference proteome</keyword>
<sequence>MIVTTTDVIQGAVIDSYLGIVTAEIVYGSNFLRDFLAGIRDVIGGRTGSYERLFEQGQRKAIEELELRAQRLGANAVIGIEIDTGTINVDQSGVLLLITATGTAVRVR</sequence>
<gene>
    <name type="ordered locus">alr2488</name>
</gene>
<feature type="chain" id="PRO_0000138457" description="UPF0145 protein alr2488">
    <location>
        <begin position="1"/>
        <end position="108"/>
    </location>
</feature>